<evidence type="ECO:0000255" key="1">
    <source>
        <dbReference type="HAMAP-Rule" id="MF_02002"/>
    </source>
</evidence>
<protein>
    <recommendedName>
        <fullName evidence="1">Isoleucine--tRNA ligase</fullName>
        <ecNumber evidence="1">6.1.1.5</ecNumber>
    </recommendedName>
    <alternativeName>
        <fullName evidence="1">Isoleucyl-tRNA synthetase</fullName>
        <shortName evidence="1">IleRS</shortName>
    </alternativeName>
</protein>
<organism>
    <name type="scientific">Helicobacter hepaticus (strain ATCC 51449 / 3B1)</name>
    <dbReference type="NCBI Taxonomy" id="235279"/>
    <lineage>
        <taxon>Bacteria</taxon>
        <taxon>Pseudomonadati</taxon>
        <taxon>Campylobacterota</taxon>
        <taxon>Epsilonproteobacteria</taxon>
        <taxon>Campylobacterales</taxon>
        <taxon>Helicobacteraceae</taxon>
        <taxon>Helicobacter</taxon>
    </lineage>
</organism>
<comment type="function">
    <text evidence="1">Catalyzes the attachment of isoleucine to tRNA(Ile). As IleRS can inadvertently accommodate and process structurally similar amino acids such as valine, to avoid such errors it has two additional distinct tRNA(Ile)-dependent editing activities. One activity is designated as 'pretransfer' editing and involves the hydrolysis of activated Val-AMP. The other activity is designated 'posttransfer' editing and involves deacylation of mischarged Val-tRNA(Ile).</text>
</comment>
<comment type="catalytic activity">
    <reaction evidence="1">
        <text>tRNA(Ile) + L-isoleucine + ATP = L-isoleucyl-tRNA(Ile) + AMP + diphosphate</text>
        <dbReference type="Rhea" id="RHEA:11060"/>
        <dbReference type="Rhea" id="RHEA-COMP:9666"/>
        <dbReference type="Rhea" id="RHEA-COMP:9695"/>
        <dbReference type="ChEBI" id="CHEBI:30616"/>
        <dbReference type="ChEBI" id="CHEBI:33019"/>
        <dbReference type="ChEBI" id="CHEBI:58045"/>
        <dbReference type="ChEBI" id="CHEBI:78442"/>
        <dbReference type="ChEBI" id="CHEBI:78528"/>
        <dbReference type="ChEBI" id="CHEBI:456215"/>
        <dbReference type="EC" id="6.1.1.5"/>
    </reaction>
</comment>
<comment type="cofactor">
    <cofactor evidence="1">
        <name>Zn(2+)</name>
        <dbReference type="ChEBI" id="CHEBI:29105"/>
    </cofactor>
    <text evidence="1">Binds 1 zinc ion per subunit.</text>
</comment>
<comment type="subunit">
    <text evidence="1">Monomer.</text>
</comment>
<comment type="subcellular location">
    <subcellularLocation>
        <location evidence="1">Cytoplasm</location>
    </subcellularLocation>
</comment>
<comment type="domain">
    <text evidence="1">IleRS has two distinct active sites: one for aminoacylation and one for editing. The misactivated valine is translocated from the active site to the editing site, which sterically excludes the correctly activated isoleucine. The single editing site contains two valyl binding pockets, one specific for each substrate (Val-AMP or Val-tRNA(Ile)).</text>
</comment>
<comment type="similarity">
    <text evidence="1">Belongs to the class-I aminoacyl-tRNA synthetase family. IleS type 1 subfamily.</text>
</comment>
<accession>Q7VGX8</accession>
<name>SYI_HELHP</name>
<dbReference type="EC" id="6.1.1.5" evidence="1"/>
<dbReference type="EMBL" id="AE017125">
    <property type="protein sequence ID" value="AAP77787.1"/>
    <property type="molecule type" value="Genomic_DNA"/>
</dbReference>
<dbReference type="RefSeq" id="WP_011116030.1">
    <property type="nucleotide sequence ID" value="NC_004917.1"/>
</dbReference>
<dbReference type="SMR" id="Q7VGX8"/>
<dbReference type="STRING" id="235279.HH_1190"/>
<dbReference type="KEGG" id="hhe:HH_1190"/>
<dbReference type="eggNOG" id="COG0060">
    <property type="taxonomic scope" value="Bacteria"/>
</dbReference>
<dbReference type="HOGENOM" id="CLU_001493_7_1_7"/>
<dbReference type="OrthoDB" id="9810365at2"/>
<dbReference type="Proteomes" id="UP000002495">
    <property type="component" value="Chromosome"/>
</dbReference>
<dbReference type="GO" id="GO:0005829">
    <property type="term" value="C:cytosol"/>
    <property type="evidence" value="ECO:0007669"/>
    <property type="project" value="TreeGrafter"/>
</dbReference>
<dbReference type="GO" id="GO:0002161">
    <property type="term" value="F:aminoacyl-tRNA deacylase activity"/>
    <property type="evidence" value="ECO:0007669"/>
    <property type="project" value="InterPro"/>
</dbReference>
<dbReference type="GO" id="GO:0005524">
    <property type="term" value="F:ATP binding"/>
    <property type="evidence" value="ECO:0007669"/>
    <property type="project" value="UniProtKB-UniRule"/>
</dbReference>
<dbReference type="GO" id="GO:0004822">
    <property type="term" value="F:isoleucine-tRNA ligase activity"/>
    <property type="evidence" value="ECO:0007669"/>
    <property type="project" value="UniProtKB-UniRule"/>
</dbReference>
<dbReference type="GO" id="GO:0000049">
    <property type="term" value="F:tRNA binding"/>
    <property type="evidence" value="ECO:0007669"/>
    <property type="project" value="InterPro"/>
</dbReference>
<dbReference type="GO" id="GO:0008270">
    <property type="term" value="F:zinc ion binding"/>
    <property type="evidence" value="ECO:0007669"/>
    <property type="project" value="UniProtKB-UniRule"/>
</dbReference>
<dbReference type="GO" id="GO:0006428">
    <property type="term" value="P:isoleucyl-tRNA aminoacylation"/>
    <property type="evidence" value="ECO:0007669"/>
    <property type="project" value="UniProtKB-UniRule"/>
</dbReference>
<dbReference type="CDD" id="cd07960">
    <property type="entry name" value="Anticodon_Ia_Ile_BEm"/>
    <property type="match status" value="1"/>
</dbReference>
<dbReference type="CDD" id="cd00818">
    <property type="entry name" value="IleRS_core"/>
    <property type="match status" value="1"/>
</dbReference>
<dbReference type="FunFam" id="3.40.50.620:FF:000042">
    <property type="entry name" value="Isoleucine--tRNA ligase"/>
    <property type="match status" value="1"/>
</dbReference>
<dbReference type="Gene3D" id="1.10.730.20">
    <property type="match status" value="1"/>
</dbReference>
<dbReference type="Gene3D" id="3.40.50.620">
    <property type="entry name" value="HUPs"/>
    <property type="match status" value="2"/>
</dbReference>
<dbReference type="Gene3D" id="1.10.10.830">
    <property type="entry name" value="Ile-tRNA synthetase CP2 domain-like"/>
    <property type="match status" value="1"/>
</dbReference>
<dbReference type="Gene3D" id="3.90.740.10">
    <property type="entry name" value="Valyl/Leucyl/Isoleucyl-tRNA synthetase, editing domain"/>
    <property type="match status" value="1"/>
</dbReference>
<dbReference type="HAMAP" id="MF_02002">
    <property type="entry name" value="Ile_tRNA_synth_type1"/>
    <property type="match status" value="1"/>
</dbReference>
<dbReference type="InterPro" id="IPR001412">
    <property type="entry name" value="aa-tRNA-synth_I_CS"/>
</dbReference>
<dbReference type="InterPro" id="IPR002300">
    <property type="entry name" value="aa-tRNA-synth_Ia"/>
</dbReference>
<dbReference type="InterPro" id="IPR033708">
    <property type="entry name" value="Anticodon_Ile_BEm"/>
</dbReference>
<dbReference type="InterPro" id="IPR002301">
    <property type="entry name" value="Ile-tRNA-ligase"/>
</dbReference>
<dbReference type="InterPro" id="IPR023585">
    <property type="entry name" value="Ile-tRNA-ligase_type1"/>
</dbReference>
<dbReference type="InterPro" id="IPR050081">
    <property type="entry name" value="Ile-tRNA_ligase"/>
</dbReference>
<dbReference type="InterPro" id="IPR013155">
    <property type="entry name" value="M/V/L/I-tRNA-synth_anticd-bd"/>
</dbReference>
<dbReference type="InterPro" id="IPR014729">
    <property type="entry name" value="Rossmann-like_a/b/a_fold"/>
</dbReference>
<dbReference type="InterPro" id="IPR009080">
    <property type="entry name" value="tRNAsynth_Ia_anticodon-bd"/>
</dbReference>
<dbReference type="InterPro" id="IPR009008">
    <property type="entry name" value="Val/Leu/Ile-tRNA-synth_edit"/>
</dbReference>
<dbReference type="NCBIfam" id="TIGR00392">
    <property type="entry name" value="ileS"/>
    <property type="match status" value="1"/>
</dbReference>
<dbReference type="PANTHER" id="PTHR42765:SF1">
    <property type="entry name" value="ISOLEUCINE--TRNA LIGASE, MITOCHONDRIAL"/>
    <property type="match status" value="1"/>
</dbReference>
<dbReference type="PANTHER" id="PTHR42765">
    <property type="entry name" value="SOLEUCYL-TRNA SYNTHETASE"/>
    <property type="match status" value="1"/>
</dbReference>
<dbReference type="Pfam" id="PF08264">
    <property type="entry name" value="Anticodon_1"/>
    <property type="match status" value="1"/>
</dbReference>
<dbReference type="Pfam" id="PF00133">
    <property type="entry name" value="tRNA-synt_1"/>
    <property type="match status" value="1"/>
</dbReference>
<dbReference type="PRINTS" id="PR00984">
    <property type="entry name" value="TRNASYNTHILE"/>
</dbReference>
<dbReference type="SUPFAM" id="SSF47323">
    <property type="entry name" value="Anticodon-binding domain of a subclass of class I aminoacyl-tRNA synthetases"/>
    <property type="match status" value="1"/>
</dbReference>
<dbReference type="SUPFAM" id="SSF52374">
    <property type="entry name" value="Nucleotidylyl transferase"/>
    <property type="match status" value="1"/>
</dbReference>
<dbReference type="SUPFAM" id="SSF50677">
    <property type="entry name" value="ValRS/IleRS/LeuRS editing domain"/>
    <property type="match status" value="1"/>
</dbReference>
<dbReference type="PROSITE" id="PS00178">
    <property type="entry name" value="AA_TRNA_LIGASE_I"/>
    <property type="match status" value="1"/>
</dbReference>
<feature type="chain" id="PRO_0000098397" description="Isoleucine--tRNA ligase">
    <location>
        <begin position="1"/>
        <end position="930"/>
    </location>
</feature>
<feature type="short sequence motif" description="'HIGH' region">
    <location>
        <begin position="57"/>
        <end position="67"/>
    </location>
</feature>
<feature type="short sequence motif" description="'KMSKS' region">
    <location>
        <begin position="614"/>
        <end position="618"/>
    </location>
</feature>
<feature type="binding site" evidence="1">
    <location>
        <position position="573"/>
    </location>
    <ligand>
        <name>L-isoleucyl-5'-AMP</name>
        <dbReference type="ChEBI" id="CHEBI:178002"/>
    </ligand>
</feature>
<feature type="binding site" evidence="1">
    <location>
        <position position="617"/>
    </location>
    <ligand>
        <name>ATP</name>
        <dbReference type="ChEBI" id="CHEBI:30616"/>
    </ligand>
</feature>
<feature type="binding site" evidence="1">
    <location>
        <position position="902"/>
    </location>
    <ligand>
        <name>Zn(2+)</name>
        <dbReference type="ChEBI" id="CHEBI:29105"/>
    </ligand>
</feature>
<feature type="binding site" evidence="1">
    <location>
        <position position="905"/>
    </location>
    <ligand>
        <name>Zn(2+)</name>
        <dbReference type="ChEBI" id="CHEBI:29105"/>
    </ligand>
</feature>
<feature type="binding site" evidence="1">
    <location>
        <position position="918"/>
    </location>
    <ligand>
        <name>Zn(2+)</name>
        <dbReference type="ChEBI" id="CHEBI:29105"/>
    </ligand>
</feature>
<feature type="binding site" evidence="1">
    <location>
        <position position="921"/>
    </location>
    <ligand>
        <name>Zn(2+)</name>
        <dbReference type="ChEBI" id="CHEBI:29105"/>
    </ligand>
</feature>
<gene>
    <name evidence="1" type="primary">ileS</name>
    <name type="ordered locus">HH_1190</name>
</gene>
<proteinExistence type="inferred from homology"/>
<sequence length="930" mass="106646">MDYKETLILPDTSFPMRGNLPANEPHTYAKWRDEKLYSKLKNAHSGAKNFCLHDGPPYANGHLHIGHALNKILKDIIVKYHYFKGENIRYTPGWDCHGLPIEQQVEQKIGKAKKDNLNKTKLRELCRNHAQKFIQIQSDEFQALGVLGDFENPYKTMDFAFEAQIYRSLIELVKEGLLAERSKPIYWSWACETALADAEVEYQDKQSDSIFVAFTLSDSALQSLGISQGKVIIWTTTPWTLPANVGIALNPSESYVLTDKGYIVAKALLEKVCENIDIGISKREFKAQEFERLEAINPLNGRTSLIVLGEHVSINDGTGAVHTAPGHGEDDYYIGLKYGLEVIMPVDDRGNFSPLIESMGLVPKEFANEFVGKNIFDTHESIFKILGKALLKQDVITHSYPHCWRSHKPVIYRATAQWFILLDKPFYQGKTLKELALEELDKVRFYPQNGKNRIYSMIENRPDWCISRQRDWGVPIAFLIDKITNVALLDEAVLEHIACIFEKEGCDAWWSYEIKDLLPPSHKHLAENLTKSKHILDVWFDSGSTWSAVLENEYKGAGNNYDAGSHPADMYLEGSDQHRGWFQSSLLLSCAIAKRAPYKQILTHGFTFDRNGEKMSKSKGNVISPSEIIKTQGSEILRLWVALSHYQSDQNISDEILKQVGEQYRKIRNTIRFLLANASQNSQDMVEKDELDVIDRWILSVCDRVFDEAYEYFDEYEFAKAFQVVMSFLINELSGIYLDLCKDILYCDDVSSLRRRAIQSALVMILRRVLHFIAPVLTYTADEAFRHSSAALKGEYESIFDLPKLSCAQGYNLEINEDFTRLLRVREKFTESLDNLKKQKIVKSSLEVLLQSPQEKEFALLDRWLIVSGVCGKECKDKEELARFMLEDKEEFVIYRAQNGRCERCWQFIVEESEGKLCKRCTSVIAQTKK</sequence>
<keyword id="KW-0030">Aminoacyl-tRNA synthetase</keyword>
<keyword id="KW-0067">ATP-binding</keyword>
<keyword id="KW-0963">Cytoplasm</keyword>
<keyword id="KW-0436">Ligase</keyword>
<keyword id="KW-0479">Metal-binding</keyword>
<keyword id="KW-0547">Nucleotide-binding</keyword>
<keyword id="KW-0648">Protein biosynthesis</keyword>
<keyword id="KW-1185">Reference proteome</keyword>
<keyword id="KW-0862">Zinc</keyword>
<reference key="1">
    <citation type="journal article" date="2003" name="Proc. Natl. Acad. Sci. U.S.A.">
        <title>The complete genome sequence of the carcinogenic bacterium Helicobacter hepaticus.</title>
        <authorList>
            <person name="Suerbaum S."/>
            <person name="Josenhans C."/>
            <person name="Sterzenbach T."/>
            <person name="Drescher B."/>
            <person name="Brandt P."/>
            <person name="Bell M."/>
            <person name="Droege M."/>
            <person name="Fartmann B."/>
            <person name="Fischer H.-P."/>
            <person name="Ge Z."/>
            <person name="Hoerster A."/>
            <person name="Holland R."/>
            <person name="Klein K."/>
            <person name="Koenig J."/>
            <person name="Macko L."/>
            <person name="Mendz G.L."/>
            <person name="Nyakatura G."/>
            <person name="Schauer D.B."/>
            <person name="Shen Z."/>
            <person name="Weber J."/>
            <person name="Frosch M."/>
            <person name="Fox J.G."/>
        </authorList>
    </citation>
    <scope>NUCLEOTIDE SEQUENCE [LARGE SCALE GENOMIC DNA]</scope>
    <source>
        <strain>ATCC 51449 / 3B1</strain>
    </source>
</reference>